<gene>
    <name evidence="2" type="primary">HINT2</name>
</gene>
<reference key="1">
    <citation type="submission" date="2001-03" db="EMBL/GenBank/DDBJ databases">
        <title>HINT-3 is a novel member of the histidine triad protein family.</title>
        <authorList>
            <person name="Peng J."/>
            <person name="Chen H."/>
            <person name="Huang C.-H."/>
        </authorList>
    </citation>
    <scope>NUCLEOTIDE SEQUENCE [MRNA]</scope>
</reference>
<reference key="2">
    <citation type="submission" date="2006-02" db="EMBL/GenBank/DDBJ databases">
        <authorList>
            <consortium name="NIH - Mammalian Gene Collection (MGC) project"/>
        </authorList>
    </citation>
    <scope>NUCLEOTIDE SEQUENCE [LARGE SCALE MRNA]</scope>
    <source>
        <strain>Hereford</strain>
        <tissue>Thymus</tissue>
    </source>
</reference>
<protein>
    <recommendedName>
        <fullName evidence="2">Adenosine 5'-monophosphoramidase HINT2</fullName>
        <ecNumber evidence="2">3.9.1.-</ecNumber>
    </recommendedName>
    <alternativeName>
        <fullName evidence="2">HINT-3</fullName>
    </alternativeName>
    <alternativeName>
        <fullName evidence="2">Histidine triad nucleotide-binding protein 2, mitochondrial</fullName>
        <shortName evidence="2">HINT-2</shortName>
    </alternativeName>
</protein>
<evidence type="ECO:0000250" key="1"/>
<evidence type="ECO:0000250" key="2">
    <source>
        <dbReference type="UniProtKB" id="Q9BX68"/>
    </source>
</evidence>
<evidence type="ECO:0000250" key="3">
    <source>
        <dbReference type="UniProtKB" id="Q9D0S9"/>
    </source>
</evidence>
<evidence type="ECO:0000255" key="4"/>
<evidence type="ECO:0000255" key="5">
    <source>
        <dbReference type="PROSITE-ProRule" id="PRU00464"/>
    </source>
</evidence>
<evidence type="ECO:0000305" key="6"/>
<keyword id="KW-0007">Acetylation</keyword>
<keyword id="KW-0053">Apoptosis</keyword>
<keyword id="KW-0378">Hydrolase</keyword>
<keyword id="KW-0444">Lipid biosynthesis</keyword>
<keyword id="KW-0443">Lipid metabolism</keyword>
<keyword id="KW-0496">Mitochondrion</keyword>
<keyword id="KW-0547">Nucleotide-binding</keyword>
<keyword id="KW-1185">Reference proteome</keyword>
<keyword id="KW-0752">Steroid biosynthesis</keyword>
<keyword id="KW-0809">Transit peptide</keyword>
<proteinExistence type="evidence at transcript level"/>
<dbReference type="EC" id="3.9.1.-" evidence="2"/>
<dbReference type="EMBL" id="AF366940">
    <property type="protein sequence ID" value="AAM00370.1"/>
    <property type="molecule type" value="mRNA"/>
</dbReference>
<dbReference type="EMBL" id="BC114199">
    <property type="protein sequence ID" value="AAI14200.1"/>
    <property type="molecule type" value="mRNA"/>
</dbReference>
<dbReference type="RefSeq" id="NP_776765.1">
    <property type="nucleotide sequence ID" value="NM_174340.2"/>
</dbReference>
<dbReference type="SMR" id="Q8SQ21"/>
<dbReference type="FunCoup" id="Q8SQ21">
    <property type="interactions" value="1632"/>
</dbReference>
<dbReference type="STRING" id="9913.ENSBTAP00000015208"/>
<dbReference type="GlyGen" id="Q8SQ21">
    <property type="glycosylation" value="1 site, 1 O-linked glycan (1 site)"/>
</dbReference>
<dbReference type="PaxDb" id="9913-ENSBTAP00000015208"/>
<dbReference type="PeptideAtlas" id="Q8SQ21"/>
<dbReference type="GeneID" id="281816"/>
<dbReference type="KEGG" id="bta:281816"/>
<dbReference type="CTD" id="84681"/>
<dbReference type="VEuPathDB" id="HostDB:ENSBTAG00000011444"/>
<dbReference type="eggNOG" id="KOG3275">
    <property type="taxonomic scope" value="Eukaryota"/>
</dbReference>
<dbReference type="HOGENOM" id="CLU_056776_8_0_1"/>
<dbReference type="InParanoid" id="Q8SQ21"/>
<dbReference type="OMA" id="YRVVMNC"/>
<dbReference type="OrthoDB" id="672793at2759"/>
<dbReference type="TreeFam" id="TF314862"/>
<dbReference type="Reactome" id="R-BTA-9013405">
    <property type="pathway name" value="RHOD GTPase cycle"/>
</dbReference>
<dbReference type="Proteomes" id="UP000009136">
    <property type="component" value="Chromosome 8"/>
</dbReference>
<dbReference type="Bgee" id="ENSBTAG00000011444">
    <property type="expression patterns" value="Expressed in thyroid gland and 105 other cell types or tissues"/>
</dbReference>
<dbReference type="GO" id="GO:0005737">
    <property type="term" value="C:cytoplasm"/>
    <property type="evidence" value="ECO:0000318"/>
    <property type="project" value="GO_Central"/>
</dbReference>
<dbReference type="GO" id="GO:0005739">
    <property type="term" value="C:mitochondrion"/>
    <property type="evidence" value="ECO:0000250"/>
    <property type="project" value="UniProtKB"/>
</dbReference>
<dbReference type="GO" id="GO:0043530">
    <property type="term" value="F:adenosine 5'-monophosphoramidase activity"/>
    <property type="evidence" value="ECO:0000250"/>
    <property type="project" value="UniProtKB"/>
</dbReference>
<dbReference type="GO" id="GO:0016787">
    <property type="term" value="F:hydrolase activity"/>
    <property type="evidence" value="ECO:0000318"/>
    <property type="project" value="GO_Central"/>
</dbReference>
<dbReference type="GO" id="GO:0000166">
    <property type="term" value="F:nucleotide binding"/>
    <property type="evidence" value="ECO:0007669"/>
    <property type="project" value="UniProtKB-KW"/>
</dbReference>
<dbReference type="GO" id="GO:0006915">
    <property type="term" value="P:apoptotic process"/>
    <property type="evidence" value="ECO:0007669"/>
    <property type="project" value="UniProtKB-KW"/>
</dbReference>
<dbReference type="GO" id="GO:0006694">
    <property type="term" value="P:steroid biosynthetic process"/>
    <property type="evidence" value="ECO:0007669"/>
    <property type="project" value="UniProtKB-KW"/>
</dbReference>
<dbReference type="CDD" id="cd01276">
    <property type="entry name" value="PKCI_related"/>
    <property type="match status" value="1"/>
</dbReference>
<dbReference type="FunFam" id="3.30.428.10:FF:000005">
    <property type="entry name" value="Histidine triad nucleotide-binding protein 1"/>
    <property type="match status" value="1"/>
</dbReference>
<dbReference type="Gene3D" id="3.30.428.10">
    <property type="entry name" value="HIT-like"/>
    <property type="match status" value="1"/>
</dbReference>
<dbReference type="InterPro" id="IPR019808">
    <property type="entry name" value="Histidine_triad_CS"/>
</dbReference>
<dbReference type="InterPro" id="IPR001310">
    <property type="entry name" value="Histidine_triad_HIT"/>
</dbReference>
<dbReference type="InterPro" id="IPR011146">
    <property type="entry name" value="HIT-like"/>
</dbReference>
<dbReference type="InterPro" id="IPR036265">
    <property type="entry name" value="HIT-like_sf"/>
</dbReference>
<dbReference type="PANTHER" id="PTHR23089">
    <property type="entry name" value="HISTIDINE TRIAD HIT PROTEIN"/>
    <property type="match status" value="1"/>
</dbReference>
<dbReference type="Pfam" id="PF01230">
    <property type="entry name" value="HIT"/>
    <property type="match status" value="1"/>
</dbReference>
<dbReference type="PRINTS" id="PR00332">
    <property type="entry name" value="HISTRIAD"/>
</dbReference>
<dbReference type="SUPFAM" id="SSF54197">
    <property type="entry name" value="HIT-like"/>
    <property type="match status" value="1"/>
</dbReference>
<dbReference type="PROSITE" id="PS00892">
    <property type="entry name" value="HIT_1"/>
    <property type="match status" value="1"/>
</dbReference>
<dbReference type="PROSITE" id="PS51084">
    <property type="entry name" value="HIT_2"/>
    <property type="match status" value="1"/>
</dbReference>
<sequence length="163" mass="17147">MAAAVVLAAGLCVARRAVAVAGPRGVQVRGAAGVTDGDEVAKAQQAAPGGAAPTIFSRILDRSLPADILYEDQQCLAFRDVAPQAPVHFLVIPKKPIPRISQAEEEDQQLLGHLLLVAKETAKAEGLGDGYRLVINDGKLGAQSVYHLHIHVLGGRQLQWPPG</sequence>
<comment type="function">
    <text evidence="2">Exhibits adenosine 5'-monophosphoramidase activity, hydrolyzing purine nucleotide phosphoramidates with a single phosphate group such as adenosine 5'monophosphoramidate (AMP-NH2) to yield AMP and NH2 (By similarity). Hydrolyzes adenosine 5'-O-p-nitrophenylphosphoramidate (AMP-pNA) (By similarity). May be involved in steroid biosynthesis (By similarity). May play a role in apoptosis (By similarity).</text>
</comment>
<comment type="catalytic activity">
    <reaction evidence="2">
        <text>adenosine 5'-phosphoramidate + H2O = AMP + NH4(+)</text>
        <dbReference type="Rhea" id="RHEA:67916"/>
        <dbReference type="ChEBI" id="CHEBI:15377"/>
        <dbReference type="ChEBI" id="CHEBI:28938"/>
        <dbReference type="ChEBI" id="CHEBI:57890"/>
        <dbReference type="ChEBI" id="CHEBI:456215"/>
    </reaction>
</comment>
<comment type="subcellular location">
    <subcellularLocation>
        <location evidence="2">Mitochondrion</location>
    </subcellularLocation>
</comment>
<comment type="similarity">
    <text evidence="6">Belongs to the HINT family.</text>
</comment>
<feature type="transit peptide" description="Mitochondrion" evidence="4">
    <location>
        <begin position="1"/>
        <end position="17"/>
    </location>
</feature>
<feature type="chain" id="PRO_0000109785" description="Adenosine 5'-monophosphoramidase HINT2">
    <location>
        <begin position="18"/>
        <end position="163"/>
    </location>
</feature>
<feature type="domain" description="HIT" evidence="5">
    <location>
        <begin position="55"/>
        <end position="163"/>
    </location>
</feature>
<feature type="short sequence motif" description="Histidine triad motif">
    <location>
        <begin position="147"/>
        <end position="151"/>
    </location>
</feature>
<feature type="active site" description="Tele-AMP-histidine intermediate" evidence="1">
    <location>
        <position position="149"/>
    </location>
</feature>
<feature type="binding site" evidence="2">
    <location>
        <position position="63"/>
    </location>
    <ligand>
        <name>AMP</name>
        <dbReference type="ChEBI" id="CHEBI:456215"/>
    </ligand>
</feature>
<feature type="binding site" evidence="2">
    <location>
        <position position="80"/>
    </location>
    <ligand>
        <name>AMP</name>
        <dbReference type="ChEBI" id="CHEBI:456215"/>
    </ligand>
</feature>
<feature type="binding site" evidence="2">
    <location>
        <position position="136"/>
    </location>
    <ligand>
        <name>AMP</name>
        <dbReference type="ChEBI" id="CHEBI:456215"/>
    </ligand>
</feature>
<feature type="binding site" evidence="2">
    <location>
        <begin position="142"/>
        <end position="145"/>
    </location>
    <ligand>
        <name>AMP</name>
        <dbReference type="ChEBI" id="CHEBI:456215"/>
    </ligand>
</feature>
<feature type="binding site" evidence="2">
    <location>
        <begin position="149"/>
        <end position="151"/>
    </location>
    <ligand>
        <name>AMP</name>
        <dbReference type="ChEBI" id="CHEBI:456215"/>
    </ligand>
</feature>
<feature type="modified residue" description="N6-acetyllysine" evidence="3">
    <location>
        <position position="119"/>
    </location>
</feature>
<feature type="modified residue" description="N6-acetyllysine" evidence="3">
    <location>
        <position position="139"/>
    </location>
</feature>
<name>HINT2_BOVIN</name>
<organism>
    <name type="scientific">Bos taurus</name>
    <name type="common">Bovine</name>
    <dbReference type="NCBI Taxonomy" id="9913"/>
    <lineage>
        <taxon>Eukaryota</taxon>
        <taxon>Metazoa</taxon>
        <taxon>Chordata</taxon>
        <taxon>Craniata</taxon>
        <taxon>Vertebrata</taxon>
        <taxon>Euteleostomi</taxon>
        <taxon>Mammalia</taxon>
        <taxon>Eutheria</taxon>
        <taxon>Laurasiatheria</taxon>
        <taxon>Artiodactyla</taxon>
        <taxon>Ruminantia</taxon>
        <taxon>Pecora</taxon>
        <taxon>Bovidae</taxon>
        <taxon>Bovinae</taxon>
        <taxon>Bos</taxon>
    </lineage>
</organism>
<accession>Q8SQ21</accession>
<accession>Q24JY2</accession>